<comment type="function">
    <text evidence="1">Factor of infectivity and pathogenicity, required for optimal virus replication. Alters numerous pathways of T-lymphocyte function and down-regulates immunity surface molecules in order to evade host defense and increase viral infectivity. Alters the functionality of other immunity cells, like dendritic cells, monocytes/macrophages and NK cells. One of the earliest and most abundantly expressed viral proteins (By similarity).</text>
</comment>
<comment type="function">
    <text evidence="1">In infected CD4(+) T-lymphocytes, down-regulates the surface MHC-I, mature MHC-II, CD4, CD28, CCR5 and CXCR4 molecules. Mediates internalization and degradation of host CD4 through the interaction of with the cytoplasmic tail of CD4, the recruitment of AP-2 (clathrin adapter protein complex 2), internalization through clathrin coated pits, and subsequent transport to endosomes and lysosomes for degradation. Diverts host MHC-I molecules to the trans-Golgi network-associated endosomal compartments by an endocytic pathway to finally target them for degradation. MHC-I down-regulation may involve AP-1 (clathrin adapter protein complex 1) or possibly Src family kinase-ZAP70/Syk-PI3K cascade recruited by PACS2. In consequence infected cells are masked for immune recognition by cytotoxic T-lymphocytes. Decreasing the number of immune receptors also prevents reinfection by more HIV particles (superinfection) (By similarity).</text>
</comment>
<comment type="function">
    <text evidence="1">Bypasses host T-cell signaling by inducing a transcriptional program nearly identical to that of anti-CD3 cell activation. Interaction with TCR-zeta chain up-regulates the Fas ligand (FasL). Increasing surface FasL molecules and decreasing surface MHC-I molecules on infected CD4(+) cells send attacking cytotoxic CD8+ T-lymphocytes into apoptosis (By similarity).</text>
</comment>
<comment type="function">
    <text evidence="1">Plays a role in optimizing the host cell environment for viral replication without causing cell death by apoptosis. Protects the infected cells from apoptosis in order to keep them alive until the next virus generation is ready to strike. Inhibits the Fas and TNFR-mediated death signals by blocking MAP3K5. Interacts and decreases the half-life of p53, protecting the infected cell against p53-mediated apoptosis. Inhibits the apoptotic signals regulated by the Bcl-2 family proteins through the formation of a Nef/PI3-kinase/PAK2 complex that leads to activation of PAK2 and induces phosphorylation of Bad (By similarity).</text>
</comment>
<comment type="function">
    <text evidence="1">Extracellular Nef protein targets CD4(+) T-lymphocytes for apoptosis by interacting with CXCR4 surface receptors.</text>
</comment>
<comment type="subunit">
    <text evidence="1">Homodimer (By similarity). Interacts with Nef associated p21-activated kinase (PAK2); this interaction activates PAK2. Associates with the Nef-MHC-I-AP1 complex; this complex is required for MHC-I internalization. Interacts (via C-terminus) with host PI3-kinase (via C-terminus). Interacts with host PACS1; this interaction seems to be weak. Interacts with host PACS2. Interacts with host LCK and MAPK3; these interactions inhibit the kinase activity of the latter. Interacts with host ATP6V1H; this interaction may play a role in CD4 endocytosis. Associates with the CD4-Nef-AP2 complex; this complex is required for CD4 internalization. Interacts with TCR-zeta chain; this interaction up-regulates the Fas ligand (FasL) surface expression. Interacts with various cellular proteins including MAP3K5, beta-COP, HCK, and PTE1. Interacts with human RACK1; this increases Nef phosphorylation by PKC (By similarity).</text>
</comment>
<comment type="subcellular location">
    <subcellularLocation>
        <location evidence="1">Host cell membrane</location>
        <topology evidence="1">Lipid-anchor</topology>
        <orientation evidence="1">Cytoplasmic side</orientation>
    </subcellularLocation>
    <subcellularLocation>
        <location evidence="1">Host cytoplasm</location>
        <location evidence="1">Host perinuclear region</location>
    </subcellularLocation>
    <subcellularLocation>
        <location evidence="1">Virion</location>
    </subcellularLocation>
    <subcellularLocation>
        <location evidence="1">Secreted</location>
    </subcellularLocation>
    <text evidence="1">Predominantly found in the paranuclear area, probably in the TGN. Correct localization requires PACS1. Also associates with the inner plasma membrane through its N-terminal domain. Nef stimulates its own export via the release of exosomes. Also incorporated in virions at a rate of about 10 molecules per virion, where it is cleaved (By similarity).</text>
</comment>
<comment type="domain">
    <text evidence="1">The N-terminal domain is composed of the N-myristoyl glycine and of a cluster of positively charged amino acids. It is required for inner plasma membrane targeting of Nef and virion incorporation, and thereby for infectivity. This domain is also involved in binding to p53 (By similarity).</text>
</comment>
<comment type="domain">
    <text evidence="1">The SH3-binding domain constituted of PxxP motifs mediates binding to several Src family proteins thereby regulating their tyrosine kinase activity. The same motifs also mediates the association with MAPK3, PI3-kinase and TCR-zeta (By similarity).</text>
</comment>
<comment type="domain">
    <text evidence="1">The di-leucine internalization motif and a diacidic motif seem to be required for binding to AP-2.</text>
</comment>
<comment type="domain">
    <text evidence="1">The acidic region may play a stabilizing role in the formation of a ternary complex between Nef, the MHC-I cytoplasmic domain, and AP1M1.</text>
</comment>
<comment type="PTM">
    <text evidence="1">The virion-associated Nef proteins are cleaved by the viral protease to release the soluble C-terminal core protein. Nef is probably cleaved concomitantly with viral structural proteins on maturation of virus particles (By similarity).</text>
</comment>
<comment type="PTM">
    <text>Phosphorylated on serine residues, probably by host PKC.</text>
</comment>
<comment type="miscellaneous">
    <text>HIV-1 lineages are divided in three main groups, M (for Major), O (for Outlier), and N (for New, or Non-M, Non-O). The vast majority of strains found worldwide belong to the group M. Group O seems to be endemic to and largely confined to Cameroon and neighboring countries in West Central Africa, where these viruses represent a small minority of HIV-1 strains. The group N is represented by a limited number of isolates from Cameroonian persons. The group M is further subdivided in 9 clades or subtypes (A to D, F to H, J and K).</text>
</comment>
<comment type="similarity">
    <text evidence="2">Belongs to the lentivirus primate group Nef protein family.</text>
</comment>
<name>NEF_HV1J3</name>
<keyword id="KW-0014">AIDS</keyword>
<keyword id="KW-0053">Apoptosis</keyword>
<keyword id="KW-0244">Early protein</keyword>
<keyword id="KW-1032">Host cell membrane</keyword>
<keyword id="KW-1035">Host cytoplasm</keyword>
<keyword id="KW-1043">Host membrane</keyword>
<keyword id="KW-0945">Host-virus interaction</keyword>
<keyword id="KW-0449">Lipoprotein</keyword>
<keyword id="KW-0472">Membrane</keyword>
<keyword id="KW-0519">Myristate</keyword>
<keyword id="KW-0597">Phosphoprotein</keyword>
<keyword id="KW-0964">Secreted</keyword>
<keyword id="KW-0899">Viral immunoevasion</keyword>
<keyword id="KW-0946">Virion</keyword>
<keyword id="KW-0843">Virulence</keyword>
<dbReference type="EMBL" id="AH003604">
    <property type="protein sequence ID" value="AAB03527.1"/>
    <property type="molecule type" value="Genomic_RNA"/>
</dbReference>
<dbReference type="GO" id="GO:0005576">
    <property type="term" value="C:extracellular region"/>
    <property type="evidence" value="ECO:0007669"/>
    <property type="project" value="UniProtKB-SubCell"/>
</dbReference>
<dbReference type="GO" id="GO:0044220">
    <property type="term" value="C:host cell perinuclear region of cytoplasm"/>
    <property type="evidence" value="ECO:0007669"/>
    <property type="project" value="UniProtKB-SubCell"/>
</dbReference>
<dbReference type="GO" id="GO:0020002">
    <property type="term" value="C:host cell plasma membrane"/>
    <property type="evidence" value="ECO:0007669"/>
    <property type="project" value="UniProtKB-SubCell"/>
</dbReference>
<dbReference type="GO" id="GO:0016020">
    <property type="term" value="C:membrane"/>
    <property type="evidence" value="ECO:0007669"/>
    <property type="project" value="UniProtKB-KW"/>
</dbReference>
<dbReference type="GO" id="GO:0044423">
    <property type="term" value="C:virion component"/>
    <property type="evidence" value="ECO:0007669"/>
    <property type="project" value="UniProtKB-KW"/>
</dbReference>
<dbReference type="Gene3D" id="4.10.890.10">
    <property type="entry name" value="HIV 1 nef anchor domain"/>
    <property type="match status" value="1"/>
</dbReference>
<dbReference type="InterPro" id="IPR027480">
    <property type="entry name" value="HIV-1_Nef_anchor_sf"/>
</dbReference>
<gene>
    <name type="primary">nef</name>
</gene>
<proteinExistence type="inferred from homology"/>
<organismHost>
    <name type="scientific">Homo sapiens</name>
    <name type="common">Human</name>
    <dbReference type="NCBI Taxonomy" id="9606"/>
</organismHost>
<evidence type="ECO:0000250" key="1"/>
<evidence type="ECO:0000305" key="2"/>
<reference key="1">
    <citation type="journal article" date="1989" name="AIDS Res. Hum. Retroviruses">
        <title>Nucleotide sequences of gag and env genes of a Japanese isolate of HIV-1 and their expression in bacteria.</title>
        <authorList>
            <person name="Komiyama N."/>
            <person name="Hattori N."/>
            <person name="Inoue J."/>
            <person name="Sakuma S."/>
            <person name="Kurimura T."/>
            <person name="Yoshida M."/>
        </authorList>
    </citation>
    <scope>NUCLEOTIDE SEQUENCE [GENOMIC RNA]</scope>
</reference>
<accession>P12480</accession>
<organism>
    <name type="scientific">Human immunodeficiency virus type 1 group M subtype B (isolate JH32)</name>
    <name type="common">HIV-1</name>
    <dbReference type="NCBI Taxonomy" id="11694"/>
    <lineage>
        <taxon>Viruses</taxon>
        <taxon>Riboviria</taxon>
        <taxon>Pararnavirae</taxon>
        <taxon>Artverviricota</taxon>
        <taxon>Revtraviricetes</taxon>
        <taxon>Ortervirales</taxon>
        <taxon>Retroviridae</taxon>
        <taxon>Orthoretrovirinae</taxon>
        <taxon>Lentivirus</taxon>
        <taxon>Human immunodeficiency virus type 1</taxon>
    </lineage>
</organism>
<sequence>MGGKWSKRSVVGWPAVR</sequence>
<feature type="initiator methionine" description="Removed; by host" evidence="1">
    <location>
        <position position="1"/>
    </location>
</feature>
<feature type="chain" id="PRO_0000085228" description="Protein Nef">
    <location>
        <begin position="2"/>
        <end position="17" status="greater than"/>
    </location>
</feature>
<feature type="region of interest" description="N-terminal; associates with the host plasma membrane" evidence="1">
    <location>
        <begin position="2"/>
        <end position="17" status="greater than"/>
    </location>
</feature>
<feature type="lipid moiety-binding region" description="N-myristoyl glycine; by host" evidence="1">
    <location>
        <position position="2"/>
    </location>
</feature>
<feature type="non-terminal residue">
    <location>
        <position position="17"/>
    </location>
</feature>
<protein>
    <recommendedName>
        <fullName>Protein Nef</fullName>
    </recommendedName>
    <alternativeName>
        <fullName>3'ORF</fullName>
    </alternativeName>
    <alternativeName>
        <fullName>Negative factor</fullName>
        <shortName>F-protein</shortName>
    </alternativeName>
</protein>